<dbReference type="EC" id="4.1.1.49" evidence="1"/>
<dbReference type="EMBL" id="CP000507">
    <property type="protein sequence ID" value="ABL98376.1"/>
    <property type="molecule type" value="Genomic_DNA"/>
</dbReference>
<dbReference type="RefSeq" id="WP_011758287.1">
    <property type="nucleotide sequence ID" value="NC_008700.1"/>
</dbReference>
<dbReference type="SMR" id="A1S1X0"/>
<dbReference type="STRING" id="326297.Sama_0165"/>
<dbReference type="KEGG" id="saz:Sama_0165"/>
<dbReference type="eggNOG" id="COG1866">
    <property type="taxonomic scope" value="Bacteria"/>
</dbReference>
<dbReference type="HOGENOM" id="CLU_018247_0_1_6"/>
<dbReference type="OrthoDB" id="9806325at2"/>
<dbReference type="UniPathway" id="UPA00138"/>
<dbReference type="Proteomes" id="UP000009175">
    <property type="component" value="Chromosome"/>
</dbReference>
<dbReference type="GO" id="GO:0005829">
    <property type="term" value="C:cytosol"/>
    <property type="evidence" value="ECO:0007669"/>
    <property type="project" value="TreeGrafter"/>
</dbReference>
<dbReference type="GO" id="GO:0005524">
    <property type="term" value="F:ATP binding"/>
    <property type="evidence" value="ECO:0007669"/>
    <property type="project" value="UniProtKB-UniRule"/>
</dbReference>
<dbReference type="GO" id="GO:0046872">
    <property type="term" value="F:metal ion binding"/>
    <property type="evidence" value="ECO:0007669"/>
    <property type="project" value="UniProtKB-KW"/>
</dbReference>
<dbReference type="GO" id="GO:0004612">
    <property type="term" value="F:phosphoenolpyruvate carboxykinase (ATP) activity"/>
    <property type="evidence" value="ECO:0007669"/>
    <property type="project" value="UniProtKB-UniRule"/>
</dbReference>
<dbReference type="GO" id="GO:0006094">
    <property type="term" value="P:gluconeogenesis"/>
    <property type="evidence" value="ECO:0007669"/>
    <property type="project" value="UniProtKB-UniRule"/>
</dbReference>
<dbReference type="CDD" id="cd00484">
    <property type="entry name" value="PEPCK_ATP"/>
    <property type="match status" value="1"/>
</dbReference>
<dbReference type="FunFam" id="2.170.8.10:FF:000001">
    <property type="entry name" value="Phosphoenolpyruvate carboxykinase (ATP)"/>
    <property type="match status" value="1"/>
</dbReference>
<dbReference type="Gene3D" id="3.90.228.20">
    <property type="match status" value="1"/>
</dbReference>
<dbReference type="Gene3D" id="3.40.449.10">
    <property type="entry name" value="Phosphoenolpyruvate Carboxykinase, domain 1"/>
    <property type="match status" value="1"/>
</dbReference>
<dbReference type="Gene3D" id="2.170.8.10">
    <property type="entry name" value="Phosphoenolpyruvate Carboxykinase, domain 2"/>
    <property type="match status" value="1"/>
</dbReference>
<dbReference type="HAMAP" id="MF_00453">
    <property type="entry name" value="PEPCK_ATP"/>
    <property type="match status" value="1"/>
</dbReference>
<dbReference type="InterPro" id="IPR001272">
    <property type="entry name" value="PEP_carboxykinase_ATP"/>
</dbReference>
<dbReference type="InterPro" id="IPR013035">
    <property type="entry name" value="PEP_carboxykinase_C"/>
</dbReference>
<dbReference type="InterPro" id="IPR008210">
    <property type="entry name" value="PEP_carboxykinase_N"/>
</dbReference>
<dbReference type="InterPro" id="IPR015994">
    <property type="entry name" value="PEPCK_ATP_CS"/>
</dbReference>
<dbReference type="NCBIfam" id="TIGR00224">
    <property type="entry name" value="pckA"/>
    <property type="match status" value="1"/>
</dbReference>
<dbReference type="NCBIfam" id="NF006820">
    <property type="entry name" value="PRK09344.1-2"/>
    <property type="match status" value="1"/>
</dbReference>
<dbReference type="NCBIfam" id="NF006821">
    <property type="entry name" value="PRK09344.1-3"/>
    <property type="match status" value="1"/>
</dbReference>
<dbReference type="NCBIfam" id="NF006823">
    <property type="entry name" value="PRK09344.1-5"/>
    <property type="match status" value="1"/>
</dbReference>
<dbReference type="PANTHER" id="PTHR30031:SF0">
    <property type="entry name" value="PHOSPHOENOLPYRUVATE CARBOXYKINASE (ATP)"/>
    <property type="match status" value="1"/>
</dbReference>
<dbReference type="PANTHER" id="PTHR30031">
    <property type="entry name" value="PHOSPHOENOLPYRUVATE CARBOXYKINASE ATP"/>
    <property type="match status" value="1"/>
</dbReference>
<dbReference type="Pfam" id="PF01293">
    <property type="entry name" value="PEPCK_ATP"/>
    <property type="match status" value="1"/>
</dbReference>
<dbReference type="PIRSF" id="PIRSF006294">
    <property type="entry name" value="PEP_crbxkin"/>
    <property type="match status" value="1"/>
</dbReference>
<dbReference type="SUPFAM" id="SSF68923">
    <property type="entry name" value="PEP carboxykinase N-terminal domain"/>
    <property type="match status" value="1"/>
</dbReference>
<dbReference type="SUPFAM" id="SSF53795">
    <property type="entry name" value="PEP carboxykinase-like"/>
    <property type="match status" value="1"/>
</dbReference>
<dbReference type="PROSITE" id="PS00532">
    <property type="entry name" value="PEPCK_ATP"/>
    <property type="match status" value="1"/>
</dbReference>
<gene>
    <name evidence="1" type="primary">pckA</name>
    <name type="ordered locus">Sama_0165</name>
</gene>
<sequence length="513" mass="55974">MAEGINRVHRNPSTAELVELALRRGEGELTANGALVAKTGARTGRSPNDRFIVKEAGSEADIEWGNVNKPFAPEAFNALWDRVAAYLADKEVFVSDLEVGADPEHYLPVTVTTEYAWHQLFARNLFIIPEHFNQAGKPTWQIMNAPGFVCEPERDGTASEATVIINFAERKVLLAGLKYAGEMKKSMFSVQNFLLPAKGVLPMHCSANVGKDGDTTLFFGLSGTGKTTLSADPKRFLIGDDEHGWAPGSVFNIEGGCYAKCIDLSQKNEPVIWDAIRFGTVLENVVLDDKRVPDYKNASLTENTRAAYPLEHIAQRQEENRGGEPRAVVFLTCDVSGVLPPVSKLTKEQAAYHFLSGYTAKVGSTEMGSTAAIQSTFSTCFGAPFFPRPAGVYAELLMKRIEEFGSQVYLVNTGWTGGPYGVGKRFDIPTTRAIVDAIVSGELASVETVHLEKLNLEVPVAVPGVETALLNPVNTWADKAKYQEYAQKLAEEFQANFAKYQVPDSIKNAGPKA</sequence>
<feature type="chain" id="PRO_1000026349" description="Phosphoenolpyruvate carboxykinase (ATP)">
    <location>
        <begin position="1"/>
        <end position="513"/>
    </location>
</feature>
<feature type="binding site" evidence="1">
    <location>
        <position position="45"/>
    </location>
    <ligand>
        <name>substrate</name>
    </ligand>
</feature>
<feature type="binding site" evidence="1">
    <location>
        <position position="179"/>
    </location>
    <ligand>
        <name>substrate</name>
    </ligand>
</feature>
<feature type="binding site" evidence="1">
    <location>
        <position position="185"/>
    </location>
    <ligand>
        <name>ATP</name>
        <dbReference type="ChEBI" id="CHEBI:30616"/>
    </ligand>
</feature>
<feature type="binding site" evidence="1">
    <location>
        <position position="185"/>
    </location>
    <ligand>
        <name>Mn(2+)</name>
        <dbReference type="ChEBI" id="CHEBI:29035"/>
    </ligand>
</feature>
<feature type="binding site" evidence="1">
    <location>
        <position position="185"/>
    </location>
    <ligand>
        <name>substrate</name>
    </ligand>
</feature>
<feature type="binding site" evidence="1">
    <location>
        <position position="204"/>
    </location>
    <ligand>
        <name>ATP</name>
        <dbReference type="ChEBI" id="CHEBI:30616"/>
    </ligand>
</feature>
<feature type="binding site" evidence="1">
    <location>
        <position position="204"/>
    </location>
    <ligand>
        <name>Mn(2+)</name>
        <dbReference type="ChEBI" id="CHEBI:29035"/>
    </ligand>
</feature>
<feature type="binding site" evidence="1">
    <location>
        <begin position="220"/>
        <end position="228"/>
    </location>
    <ligand>
        <name>ATP</name>
        <dbReference type="ChEBI" id="CHEBI:30616"/>
    </ligand>
</feature>
<feature type="binding site" evidence="1">
    <location>
        <position position="241"/>
    </location>
    <ligand>
        <name>Mn(2+)</name>
        <dbReference type="ChEBI" id="CHEBI:29035"/>
    </ligand>
</feature>
<feature type="binding site" evidence="1">
    <location>
        <position position="269"/>
    </location>
    <ligand>
        <name>ATP</name>
        <dbReference type="ChEBI" id="CHEBI:30616"/>
    </ligand>
</feature>
<feature type="binding site" evidence="1">
    <location>
        <position position="305"/>
    </location>
    <ligand>
        <name>ATP</name>
        <dbReference type="ChEBI" id="CHEBI:30616"/>
    </ligand>
</feature>
<feature type="binding site" evidence="1">
    <location>
        <position position="305"/>
    </location>
    <ligand>
        <name>substrate</name>
    </ligand>
</feature>
<feature type="binding site" evidence="1">
    <location>
        <position position="431"/>
    </location>
    <ligand>
        <name>ATP</name>
        <dbReference type="ChEBI" id="CHEBI:30616"/>
    </ligand>
</feature>
<name>PCKA_SHEAM</name>
<reference key="1">
    <citation type="submission" date="2006-12" db="EMBL/GenBank/DDBJ databases">
        <title>Complete sequence of Shewanella amazonensis SB2B.</title>
        <authorList>
            <consortium name="US DOE Joint Genome Institute"/>
            <person name="Copeland A."/>
            <person name="Lucas S."/>
            <person name="Lapidus A."/>
            <person name="Barry K."/>
            <person name="Detter J.C."/>
            <person name="Glavina del Rio T."/>
            <person name="Hammon N."/>
            <person name="Israni S."/>
            <person name="Dalin E."/>
            <person name="Tice H."/>
            <person name="Pitluck S."/>
            <person name="Munk A.C."/>
            <person name="Brettin T."/>
            <person name="Bruce D."/>
            <person name="Han C."/>
            <person name="Tapia R."/>
            <person name="Gilna P."/>
            <person name="Schmutz J."/>
            <person name="Larimer F."/>
            <person name="Land M."/>
            <person name="Hauser L."/>
            <person name="Kyrpides N."/>
            <person name="Mikhailova N."/>
            <person name="Fredrickson J."/>
            <person name="Richardson P."/>
        </authorList>
    </citation>
    <scope>NUCLEOTIDE SEQUENCE [LARGE SCALE GENOMIC DNA]</scope>
    <source>
        <strain>ATCC BAA-1098 / SB2B</strain>
    </source>
</reference>
<protein>
    <recommendedName>
        <fullName evidence="1">Phosphoenolpyruvate carboxykinase (ATP)</fullName>
        <shortName evidence="1">PCK</shortName>
        <shortName evidence="1">PEP carboxykinase</shortName>
        <shortName evidence="1">PEPCK</shortName>
        <ecNumber evidence="1">4.1.1.49</ecNumber>
    </recommendedName>
</protein>
<organism>
    <name type="scientific">Shewanella amazonensis (strain ATCC BAA-1098 / SB2B)</name>
    <dbReference type="NCBI Taxonomy" id="326297"/>
    <lineage>
        <taxon>Bacteria</taxon>
        <taxon>Pseudomonadati</taxon>
        <taxon>Pseudomonadota</taxon>
        <taxon>Gammaproteobacteria</taxon>
        <taxon>Alteromonadales</taxon>
        <taxon>Shewanellaceae</taxon>
        <taxon>Shewanella</taxon>
    </lineage>
</organism>
<evidence type="ECO:0000255" key="1">
    <source>
        <dbReference type="HAMAP-Rule" id="MF_00453"/>
    </source>
</evidence>
<proteinExistence type="inferred from homology"/>
<comment type="function">
    <text evidence="1">Involved in the gluconeogenesis. Catalyzes the conversion of oxaloacetate (OAA) to phosphoenolpyruvate (PEP) through direct phosphoryl transfer between the nucleoside triphosphate and OAA.</text>
</comment>
<comment type="catalytic activity">
    <reaction evidence="1">
        <text>oxaloacetate + ATP = phosphoenolpyruvate + ADP + CO2</text>
        <dbReference type="Rhea" id="RHEA:18617"/>
        <dbReference type="ChEBI" id="CHEBI:16452"/>
        <dbReference type="ChEBI" id="CHEBI:16526"/>
        <dbReference type="ChEBI" id="CHEBI:30616"/>
        <dbReference type="ChEBI" id="CHEBI:58702"/>
        <dbReference type="ChEBI" id="CHEBI:456216"/>
        <dbReference type="EC" id="4.1.1.49"/>
    </reaction>
</comment>
<comment type="cofactor">
    <cofactor evidence="1">
        <name>Mn(2+)</name>
        <dbReference type="ChEBI" id="CHEBI:29035"/>
    </cofactor>
    <text evidence="1">Binds 1 Mn(2+) ion per subunit.</text>
</comment>
<comment type="pathway">
    <text evidence="1">Carbohydrate biosynthesis; gluconeogenesis.</text>
</comment>
<comment type="subunit">
    <text evidence="1">Monomer.</text>
</comment>
<comment type="subcellular location">
    <subcellularLocation>
        <location evidence="1">Cytoplasm</location>
    </subcellularLocation>
</comment>
<comment type="similarity">
    <text evidence="1">Belongs to the phosphoenolpyruvate carboxykinase (ATP) family.</text>
</comment>
<accession>A1S1X0</accession>
<keyword id="KW-0067">ATP-binding</keyword>
<keyword id="KW-0963">Cytoplasm</keyword>
<keyword id="KW-0210">Decarboxylase</keyword>
<keyword id="KW-0312">Gluconeogenesis</keyword>
<keyword id="KW-0456">Lyase</keyword>
<keyword id="KW-0464">Manganese</keyword>
<keyword id="KW-0479">Metal-binding</keyword>
<keyword id="KW-0547">Nucleotide-binding</keyword>
<keyword id="KW-1185">Reference proteome</keyword>